<accession>Q5LW17</accession>
<reference key="1">
    <citation type="journal article" date="2004" name="Nature">
        <title>Genome sequence of Silicibacter pomeroyi reveals adaptations to the marine environment.</title>
        <authorList>
            <person name="Moran M.A."/>
            <person name="Buchan A."/>
            <person name="Gonzalez J.M."/>
            <person name="Heidelberg J.F."/>
            <person name="Whitman W.B."/>
            <person name="Kiene R.P."/>
            <person name="Henriksen J.R."/>
            <person name="King G.M."/>
            <person name="Belas R."/>
            <person name="Fuqua C."/>
            <person name="Brinkac L.M."/>
            <person name="Lewis M."/>
            <person name="Johri S."/>
            <person name="Weaver B."/>
            <person name="Pai G."/>
            <person name="Eisen J.A."/>
            <person name="Rahe E."/>
            <person name="Sheldon W.M."/>
            <person name="Ye W."/>
            <person name="Miller T.R."/>
            <person name="Carlton J."/>
            <person name="Rasko D.A."/>
            <person name="Paulsen I.T."/>
            <person name="Ren Q."/>
            <person name="Daugherty S.C."/>
            <person name="DeBoy R.T."/>
            <person name="Dodson R.J."/>
            <person name="Durkin A.S."/>
            <person name="Madupu R."/>
            <person name="Nelson W.C."/>
            <person name="Sullivan S.A."/>
            <person name="Rosovitz M.J."/>
            <person name="Haft D.H."/>
            <person name="Selengut J."/>
            <person name="Ward N."/>
        </authorList>
    </citation>
    <scope>NUCLEOTIDE SEQUENCE [LARGE SCALE GENOMIC DNA]</scope>
    <source>
        <strain>ATCC 700808 / DSM 15171 / DSS-3</strain>
    </source>
</reference>
<reference key="2">
    <citation type="journal article" date="2014" name="Stand. Genomic Sci.">
        <title>An updated genome annotation for the model marine bacterium Ruegeria pomeroyi DSS-3.</title>
        <authorList>
            <person name="Rivers A.R."/>
            <person name="Smith C.B."/>
            <person name="Moran M.A."/>
        </authorList>
    </citation>
    <scope>GENOME REANNOTATION</scope>
    <source>
        <strain>ATCC 700808 / DSM 15171 / DSS-3</strain>
    </source>
</reference>
<evidence type="ECO:0000255" key="1">
    <source>
        <dbReference type="HAMAP-Rule" id="MF_00082"/>
    </source>
</evidence>
<keyword id="KW-0028">Amino-acid biosynthesis</keyword>
<keyword id="KW-0055">Arginine biosynthesis</keyword>
<keyword id="KW-0067">ATP-binding</keyword>
<keyword id="KW-0963">Cytoplasm</keyword>
<keyword id="KW-0418">Kinase</keyword>
<keyword id="KW-0547">Nucleotide-binding</keyword>
<keyword id="KW-1185">Reference proteome</keyword>
<keyword id="KW-0808">Transferase</keyword>
<gene>
    <name evidence="1" type="primary">argB</name>
    <name type="ordered locus">SPO0526</name>
</gene>
<sequence length="287" mass="30460">MKTRDMNRDWIATAATLNAALPYLQRYDDAIVVIKLGGHAMGSDEAMESFARDVVLLRQVGVNPVVVHGGGPMINAMLKKLDIQSEFVNGKRVTDVATVEVVEMVLSGVVNKRIVQEINRQGGKAVGLSGKDANLMICDQTNPDLGFVGTPTEMNPDLLRNLFAHDIIPVIAPLGAGREGETFNVNGDTAAGAIAAALKADRLLLLTDVSGVKNGEGEVLTELKAGQIREMIADGTIAGGMIPKTETALDALDNGVRAVVILDGRVDNAVLLELYTEHGAGSLIRRD</sequence>
<comment type="function">
    <text evidence="1">Catalyzes the ATP-dependent phosphorylation of N-acetyl-L-glutamate.</text>
</comment>
<comment type="catalytic activity">
    <reaction evidence="1">
        <text>N-acetyl-L-glutamate + ATP = N-acetyl-L-glutamyl 5-phosphate + ADP</text>
        <dbReference type="Rhea" id="RHEA:14629"/>
        <dbReference type="ChEBI" id="CHEBI:30616"/>
        <dbReference type="ChEBI" id="CHEBI:44337"/>
        <dbReference type="ChEBI" id="CHEBI:57936"/>
        <dbReference type="ChEBI" id="CHEBI:456216"/>
        <dbReference type="EC" id="2.7.2.8"/>
    </reaction>
</comment>
<comment type="pathway">
    <text evidence="1">Amino-acid biosynthesis; L-arginine biosynthesis; N(2)-acetyl-L-ornithine from L-glutamate: step 2/4.</text>
</comment>
<comment type="subcellular location">
    <subcellularLocation>
        <location evidence="1">Cytoplasm</location>
    </subcellularLocation>
</comment>
<comment type="similarity">
    <text evidence="1">Belongs to the acetylglutamate kinase family. ArgB subfamily.</text>
</comment>
<proteinExistence type="inferred from homology"/>
<name>ARGB_RUEPO</name>
<organism>
    <name type="scientific">Ruegeria pomeroyi (strain ATCC 700808 / DSM 15171 / DSS-3)</name>
    <name type="common">Silicibacter pomeroyi</name>
    <dbReference type="NCBI Taxonomy" id="246200"/>
    <lineage>
        <taxon>Bacteria</taxon>
        <taxon>Pseudomonadati</taxon>
        <taxon>Pseudomonadota</taxon>
        <taxon>Alphaproteobacteria</taxon>
        <taxon>Rhodobacterales</taxon>
        <taxon>Roseobacteraceae</taxon>
        <taxon>Ruegeria</taxon>
    </lineage>
</organism>
<dbReference type="EC" id="2.7.2.8" evidence="1"/>
<dbReference type="EMBL" id="CP000031">
    <property type="protein sequence ID" value="AAV93843.1"/>
    <property type="molecule type" value="Genomic_DNA"/>
</dbReference>
<dbReference type="RefSeq" id="WP_011046285.1">
    <property type="nucleotide sequence ID" value="NC_003911.12"/>
</dbReference>
<dbReference type="SMR" id="Q5LW17"/>
<dbReference type="STRING" id="246200.SPO0526"/>
<dbReference type="PaxDb" id="246200-SPO0526"/>
<dbReference type="KEGG" id="sil:SPO0526"/>
<dbReference type="eggNOG" id="COG0548">
    <property type="taxonomic scope" value="Bacteria"/>
</dbReference>
<dbReference type="HOGENOM" id="CLU_053680_0_0_5"/>
<dbReference type="OrthoDB" id="9803155at2"/>
<dbReference type="UniPathway" id="UPA00068">
    <property type="reaction ID" value="UER00107"/>
</dbReference>
<dbReference type="Proteomes" id="UP000001023">
    <property type="component" value="Chromosome"/>
</dbReference>
<dbReference type="GO" id="GO:0005737">
    <property type="term" value="C:cytoplasm"/>
    <property type="evidence" value="ECO:0007669"/>
    <property type="project" value="UniProtKB-SubCell"/>
</dbReference>
<dbReference type="GO" id="GO:0003991">
    <property type="term" value="F:acetylglutamate kinase activity"/>
    <property type="evidence" value="ECO:0007669"/>
    <property type="project" value="UniProtKB-UniRule"/>
</dbReference>
<dbReference type="GO" id="GO:0005524">
    <property type="term" value="F:ATP binding"/>
    <property type="evidence" value="ECO:0007669"/>
    <property type="project" value="UniProtKB-UniRule"/>
</dbReference>
<dbReference type="GO" id="GO:0042450">
    <property type="term" value="P:arginine biosynthetic process via ornithine"/>
    <property type="evidence" value="ECO:0007669"/>
    <property type="project" value="UniProtKB-UniRule"/>
</dbReference>
<dbReference type="GO" id="GO:0006526">
    <property type="term" value="P:L-arginine biosynthetic process"/>
    <property type="evidence" value="ECO:0007669"/>
    <property type="project" value="UniProtKB-UniPathway"/>
</dbReference>
<dbReference type="CDD" id="cd04250">
    <property type="entry name" value="AAK_NAGK-C"/>
    <property type="match status" value="1"/>
</dbReference>
<dbReference type="FunFam" id="3.40.1160.10:FF:000004">
    <property type="entry name" value="Acetylglutamate kinase"/>
    <property type="match status" value="1"/>
</dbReference>
<dbReference type="Gene3D" id="3.40.1160.10">
    <property type="entry name" value="Acetylglutamate kinase-like"/>
    <property type="match status" value="1"/>
</dbReference>
<dbReference type="HAMAP" id="MF_00082">
    <property type="entry name" value="ArgB"/>
    <property type="match status" value="1"/>
</dbReference>
<dbReference type="InterPro" id="IPR036393">
    <property type="entry name" value="AceGlu_kinase-like_sf"/>
</dbReference>
<dbReference type="InterPro" id="IPR004662">
    <property type="entry name" value="AcgluKinase_fam"/>
</dbReference>
<dbReference type="InterPro" id="IPR037528">
    <property type="entry name" value="ArgB"/>
</dbReference>
<dbReference type="InterPro" id="IPR001048">
    <property type="entry name" value="Asp/Glu/Uridylate_kinase"/>
</dbReference>
<dbReference type="InterPro" id="IPR001057">
    <property type="entry name" value="Glu/AcGlu_kinase"/>
</dbReference>
<dbReference type="InterPro" id="IPR041727">
    <property type="entry name" value="NAGK-C"/>
</dbReference>
<dbReference type="NCBIfam" id="TIGR00761">
    <property type="entry name" value="argB"/>
    <property type="match status" value="1"/>
</dbReference>
<dbReference type="PANTHER" id="PTHR23342">
    <property type="entry name" value="N-ACETYLGLUTAMATE SYNTHASE"/>
    <property type="match status" value="1"/>
</dbReference>
<dbReference type="PANTHER" id="PTHR23342:SF0">
    <property type="entry name" value="N-ACETYLGLUTAMATE SYNTHASE, MITOCHONDRIAL"/>
    <property type="match status" value="1"/>
</dbReference>
<dbReference type="Pfam" id="PF00696">
    <property type="entry name" value="AA_kinase"/>
    <property type="match status" value="1"/>
</dbReference>
<dbReference type="PIRSF" id="PIRSF000728">
    <property type="entry name" value="NAGK"/>
    <property type="match status" value="1"/>
</dbReference>
<dbReference type="PRINTS" id="PR00474">
    <property type="entry name" value="GLU5KINASE"/>
</dbReference>
<dbReference type="SUPFAM" id="SSF53633">
    <property type="entry name" value="Carbamate kinase-like"/>
    <property type="match status" value="1"/>
</dbReference>
<feature type="chain" id="PRO_0000264761" description="Acetylglutamate kinase">
    <location>
        <begin position="1"/>
        <end position="287"/>
    </location>
</feature>
<feature type="binding site" evidence="1">
    <location>
        <begin position="70"/>
        <end position="71"/>
    </location>
    <ligand>
        <name>substrate</name>
    </ligand>
</feature>
<feature type="binding site" evidence="1">
    <location>
        <position position="92"/>
    </location>
    <ligand>
        <name>substrate</name>
    </ligand>
</feature>
<feature type="binding site" evidence="1">
    <location>
        <position position="184"/>
    </location>
    <ligand>
        <name>substrate</name>
    </ligand>
</feature>
<feature type="site" description="Transition state stabilizer" evidence="1">
    <location>
        <position position="35"/>
    </location>
</feature>
<feature type="site" description="Transition state stabilizer" evidence="1">
    <location>
        <position position="244"/>
    </location>
</feature>
<protein>
    <recommendedName>
        <fullName evidence="1">Acetylglutamate kinase</fullName>
        <ecNumber evidence="1">2.7.2.8</ecNumber>
    </recommendedName>
    <alternativeName>
        <fullName evidence="1">N-acetyl-L-glutamate 5-phosphotransferase</fullName>
    </alternativeName>
    <alternativeName>
        <fullName evidence="1">NAG kinase</fullName>
        <shortName evidence="1">NAGK</shortName>
    </alternativeName>
</protein>